<sequence>MKKTLMASAVGAVIAFGTHGAMAAAPADWSSVAATDVTLFYPGVSPVEWITKGTEHGGARALKKGETCAGCHSEEASDMGEKMASGKKLEPSPIAGKAPFINAKVQAANDGENLYLRFTWKQPAASGAAPMDADNPVKIAYMLEGGSKVELAEAGGCWGSCHGDARTMPGAADTKTKYVKDGSLANGVYYDLNQWRSGENKAFDGYVATERVMEGGQALVDAQGKLDGDTWTVVFTRKFAGGEGDVTLAPGNLYNFGFAIHDDSATGRYHHVSLGYSLGIDAQGDITAAKQ</sequence>
<accession>P24037</accession>
<keyword id="KW-0903">Direct protein sequencing</keyword>
<keyword id="KW-0249">Electron transport</keyword>
<keyword id="KW-0349">Heme</keyword>
<keyword id="KW-0408">Iron</keyword>
<keyword id="KW-0479">Metal-binding</keyword>
<keyword id="KW-0574">Periplasm</keyword>
<keyword id="KW-0677">Repeat</keyword>
<keyword id="KW-0732">Signal</keyword>
<keyword id="KW-0813">Transport</keyword>
<dbReference type="EMBL" id="X53676">
    <property type="protein sequence ID" value="CAA40152.1"/>
    <property type="molecule type" value="Genomic_DNA"/>
</dbReference>
<dbReference type="PIR" id="S13938">
    <property type="entry name" value="CCPS2S"/>
</dbReference>
<dbReference type="RefSeq" id="WP_003279941.1">
    <property type="nucleotide sequence ID" value="NZ_CP036186.1"/>
</dbReference>
<dbReference type="SMR" id="P24037"/>
<dbReference type="GO" id="GO:0042597">
    <property type="term" value="C:periplasmic space"/>
    <property type="evidence" value="ECO:0007669"/>
    <property type="project" value="UniProtKB-SubCell"/>
</dbReference>
<dbReference type="GO" id="GO:0009055">
    <property type="term" value="F:electron transfer activity"/>
    <property type="evidence" value="ECO:0007669"/>
    <property type="project" value="InterPro"/>
</dbReference>
<dbReference type="GO" id="GO:0020037">
    <property type="term" value="F:heme binding"/>
    <property type="evidence" value="ECO:0007669"/>
    <property type="project" value="InterPro"/>
</dbReference>
<dbReference type="GO" id="GO:0046872">
    <property type="term" value="F:metal ion binding"/>
    <property type="evidence" value="ECO:0007669"/>
    <property type="project" value="UniProtKB-KW"/>
</dbReference>
<dbReference type="Gene3D" id="2.60.40.1190">
    <property type="match status" value="1"/>
</dbReference>
<dbReference type="InterPro" id="IPR019020">
    <property type="entry name" value="Cyt-c552/DMSO_Rdtase_haem-bd"/>
</dbReference>
<dbReference type="InterPro" id="IPR009056">
    <property type="entry name" value="Cyt_c-like_dom"/>
</dbReference>
<dbReference type="Pfam" id="PF09459">
    <property type="entry name" value="EB_dh"/>
    <property type="match status" value="1"/>
</dbReference>
<dbReference type="SMART" id="SM00887">
    <property type="entry name" value="EB_dh"/>
    <property type="match status" value="1"/>
</dbReference>
<dbReference type="PROSITE" id="PS51007">
    <property type="entry name" value="CYTC"/>
    <property type="match status" value="1"/>
</dbReference>
<feature type="signal peptide" evidence="3">
    <location>
        <begin position="1"/>
        <end position="23"/>
    </location>
</feature>
<feature type="chain" id="PRO_0000006570" description="Cytochrome c-552" evidence="2">
    <location>
        <begin position="24"/>
        <end position="291"/>
    </location>
</feature>
<feature type="binding site" description="covalent" evidence="1">
    <location>
        <position position="68"/>
    </location>
    <ligand>
        <name>heme c</name>
        <dbReference type="ChEBI" id="CHEBI:61717"/>
        <label>1</label>
    </ligand>
</feature>
<feature type="binding site" description="covalent" evidence="1">
    <location>
        <position position="71"/>
    </location>
    <ligand>
        <name>heme c</name>
        <dbReference type="ChEBI" id="CHEBI:61717"/>
        <label>1</label>
    </ligand>
</feature>
<feature type="binding site" description="axial binding residue" evidence="1">
    <location>
        <position position="72"/>
    </location>
    <ligand>
        <name>heme c</name>
        <dbReference type="ChEBI" id="CHEBI:61717"/>
        <label>1</label>
    </ligand>
    <ligandPart>
        <name>Fe</name>
        <dbReference type="ChEBI" id="CHEBI:18248"/>
    </ligandPart>
</feature>
<feature type="binding site" description="covalent" evidence="1">
    <location>
        <position position="157"/>
    </location>
    <ligand>
        <name>heme c</name>
        <dbReference type="ChEBI" id="CHEBI:61717"/>
        <label>2</label>
    </ligand>
</feature>
<feature type="binding site" description="covalent" evidence="1">
    <location>
        <position position="161"/>
    </location>
    <ligand>
        <name>heme c</name>
        <dbReference type="ChEBI" id="CHEBI:61717"/>
        <label>2</label>
    </ligand>
</feature>
<feature type="binding site" description="axial binding residue" evidence="1">
    <location>
        <position position="162"/>
    </location>
    <ligand>
        <name>heme c</name>
        <dbReference type="ChEBI" id="CHEBI:61717"/>
        <label>2</label>
    </ligand>
    <ligandPart>
        <name>Fe</name>
        <dbReference type="ChEBI" id="CHEBI:18248"/>
    </ligandPart>
</feature>
<feature type="sequence conflict" description="In Ref. 2; AA sequence." evidence="4" ref="2">
    <original>A</original>
    <variation>D</variation>
    <location>
        <position position="59"/>
    </location>
</feature>
<feature type="sequence conflict" description="In Ref. 2; AA sequence." evidence="4" ref="2">
    <original>D</original>
    <variation>N</variation>
    <location>
        <position position="229"/>
    </location>
</feature>
<feature type="sequence conflict" description="In Ref. 2; AA sequence." evidence="4" ref="2">
    <original>RYH</original>
    <variation>SYN</variation>
    <location>
        <begin position="268"/>
        <end position="270"/>
    </location>
</feature>
<name>C552_STUST</name>
<organism>
    <name type="scientific">Stutzerimonas stutzeri</name>
    <name type="common">Pseudomonas stutzeri</name>
    <dbReference type="NCBI Taxonomy" id="316"/>
    <lineage>
        <taxon>Bacteria</taxon>
        <taxon>Pseudomonadati</taxon>
        <taxon>Pseudomonadota</taxon>
        <taxon>Gammaproteobacteria</taxon>
        <taxon>Pseudomonadales</taxon>
        <taxon>Pseudomonadaceae</taxon>
        <taxon>Stutzerimonas</taxon>
    </lineage>
</organism>
<comment type="function">
    <text>May play a role in nitrite reduction. Shows peroxidase activity on proteolytic modification.</text>
</comment>
<comment type="subcellular location">
    <subcellularLocation>
        <location>Periplasm</location>
    </subcellularLocation>
</comment>
<comment type="induction">
    <text>By anaerobic conditions.</text>
</comment>
<comment type="PTM">
    <text>Binds 2 heme c groups per subunit.</text>
</comment>
<comment type="miscellaneous">
    <text>The second heme binding site has an unusual CXXXCH motif.</text>
</comment>
<proteinExistence type="evidence at protein level"/>
<protein>
    <recommendedName>
        <fullName>Cytochrome c-552</fullName>
    </recommendedName>
</protein>
<gene>
    <name type="primary">nirB</name>
</gene>
<evidence type="ECO:0000255" key="1">
    <source>
        <dbReference type="PROSITE-ProRule" id="PRU00433"/>
    </source>
</evidence>
<evidence type="ECO:0000269" key="2">
    <source>
    </source>
</evidence>
<evidence type="ECO:0000269" key="3">
    <source>
    </source>
</evidence>
<evidence type="ECO:0000305" key="4"/>
<reference key="1">
    <citation type="journal article" date="1991" name="FEBS Lett.">
        <title>The nirSTBM region coding for cytochrome cd1-dependent nitrite respiration of Pseudomonas stutzeri consists of a cluster of mono-, di-, and tetraheme proteins.</title>
        <authorList>
            <person name="Juengst A."/>
            <person name="Wakabayashi S."/>
            <person name="Matsubara H."/>
            <person name="Zumft W.G."/>
        </authorList>
    </citation>
    <scope>NUCLEOTIDE SEQUENCE [GENOMIC DNA]</scope>
    <source>
        <strain>ATCC 14405 / JCM 20778 / CIP 107696 / IAM 12931 / LMG 2243 / NCIMB 568 / Baumann 218 / ZoBell 632</strain>
    </source>
</reference>
<reference key="2">
    <citation type="journal article" date="1989" name="Arch. Biochem. Biophys.">
        <title>Cytochrome c peroxidase activity of a protease-modified form of cytochrome c-552 from the denitrifying bacterium Pseudomonas perfectomarina.</title>
        <authorList>
            <person name="Denariaz C.M."/>
            <person name="Liu M.-Y."/>
            <person name="Payne W.J."/>
            <person name="le Gall J."/>
            <person name="Marquez L."/>
            <person name="Dunford H.B."/>
            <person name="van Beeumen J."/>
        </authorList>
    </citation>
    <scope>PROTEIN SEQUENCE OF 24-270</scope>
    <source>
        <strain>ATCC 14405 / JCM 20778 / CIP 107696 / IAM 12931 / LMG 2243 / NCIMB 568 / Baumann 218 / ZoBell 632</strain>
    </source>
</reference>